<accession>A6SP81</accession>
<accession>A0A384K5T9</accession>
<dbReference type="EMBL" id="CP009820">
    <property type="protein sequence ID" value="ATZ58200.1"/>
    <property type="molecule type" value="Genomic_DNA"/>
</dbReference>
<dbReference type="SMR" id="A6SP81"/>
<dbReference type="EnsemblFungi" id="Bcin16g00520.1">
    <property type="protein sequence ID" value="Bcin16p00520.1"/>
    <property type="gene ID" value="Bcin16g00520"/>
</dbReference>
<dbReference type="GeneID" id="5427344"/>
<dbReference type="KEGG" id="bfu:BCIN_16g00520"/>
<dbReference type="VEuPathDB" id="FungiDB:Bcin16g00520"/>
<dbReference type="OMA" id="VMTTCKL"/>
<dbReference type="OrthoDB" id="2538135at2759"/>
<dbReference type="Proteomes" id="UP000001798">
    <property type="component" value="Chromosome bcin16"/>
</dbReference>
<dbReference type="GO" id="GO:0005634">
    <property type="term" value="C:nucleus"/>
    <property type="evidence" value="ECO:0007669"/>
    <property type="project" value="UniProtKB-SubCell"/>
</dbReference>
<dbReference type="GO" id="GO:0000981">
    <property type="term" value="F:DNA-binding transcription factor activity, RNA polymerase II-specific"/>
    <property type="evidence" value="ECO:0007669"/>
    <property type="project" value="InterPro"/>
</dbReference>
<dbReference type="GO" id="GO:0000977">
    <property type="term" value="F:RNA polymerase II transcription regulatory region sequence-specific DNA binding"/>
    <property type="evidence" value="ECO:0007669"/>
    <property type="project" value="TreeGrafter"/>
</dbReference>
<dbReference type="GO" id="GO:0008270">
    <property type="term" value="F:zinc ion binding"/>
    <property type="evidence" value="ECO:0007669"/>
    <property type="project" value="InterPro"/>
</dbReference>
<dbReference type="GO" id="GO:0009267">
    <property type="term" value="P:cellular response to starvation"/>
    <property type="evidence" value="ECO:0007669"/>
    <property type="project" value="TreeGrafter"/>
</dbReference>
<dbReference type="GO" id="GO:0006094">
    <property type="term" value="P:gluconeogenesis"/>
    <property type="evidence" value="ECO:0007669"/>
    <property type="project" value="UniProtKB-KW"/>
</dbReference>
<dbReference type="CDD" id="cd00067">
    <property type="entry name" value="GAL4"/>
    <property type="match status" value="1"/>
</dbReference>
<dbReference type="Gene3D" id="4.10.240.10">
    <property type="entry name" value="Zn(2)-C6 fungal-type DNA-binding domain"/>
    <property type="match status" value="1"/>
</dbReference>
<dbReference type="InterPro" id="IPR050335">
    <property type="entry name" value="ERT1_acuK_gluconeogen_tf"/>
</dbReference>
<dbReference type="InterPro" id="IPR056751">
    <property type="entry name" value="PAS_13"/>
</dbReference>
<dbReference type="InterPro" id="IPR036864">
    <property type="entry name" value="Zn2-C6_fun-type_DNA-bd_sf"/>
</dbReference>
<dbReference type="InterPro" id="IPR001138">
    <property type="entry name" value="Zn2Cys6_DnaBD"/>
</dbReference>
<dbReference type="PANTHER" id="PTHR47659:SF1">
    <property type="entry name" value="TRANSCRIPTION ACTIVATOR OF GLUCONEOGENESIS ERT1"/>
    <property type="match status" value="1"/>
</dbReference>
<dbReference type="PANTHER" id="PTHR47659">
    <property type="entry name" value="ZN(II)2CYS6 TRANSCRIPTION FACTOR (EUROFUNG)-RELATED"/>
    <property type="match status" value="1"/>
</dbReference>
<dbReference type="Pfam" id="PF24990">
    <property type="entry name" value="PAS_13"/>
    <property type="match status" value="1"/>
</dbReference>
<dbReference type="SMART" id="SM00066">
    <property type="entry name" value="GAL4"/>
    <property type="match status" value="1"/>
</dbReference>
<dbReference type="SUPFAM" id="SSF57701">
    <property type="entry name" value="Zn2/Cys6 DNA-binding domain"/>
    <property type="match status" value="1"/>
</dbReference>
<dbReference type="PROSITE" id="PS50048">
    <property type="entry name" value="ZN2_CY6_FUNGAL_2"/>
    <property type="match status" value="1"/>
</dbReference>
<comment type="function">
    <text evidence="1">Transcription factor which regulates nonfermentable carbon utilization. Activator of gluconeogenetic genes (By similarity).</text>
</comment>
<comment type="subcellular location">
    <subcellularLocation>
        <location evidence="2">Nucleus</location>
    </subcellularLocation>
</comment>
<comment type="similarity">
    <text evidence="4">Belongs to the ERT1/acuK family.</text>
</comment>
<feature type="chain" id="PRO_0000406436" description="Transcription activator of gluconeogenesis BC1G_14637">
    <location>
        <begin position="1"/>
        <end position="693"/>
    </location>
</feature>
<feature type="DNA-binding region" description="Zn(2)-C6 fungal-type" evidence="2">
    <location>
        <begin position="84"/>
        <end position="112"/>
    </location>
</feature>
<feature type="region of interest" description="Disordered" evidence="3">
    <location>
        <begin position="1"/>
        <end position="75"/>
    </location>
</feature>
<feature type="region of interest" description="Disordered" evidence="3">
    <location>
        <begin position="144"/>
        <end position="170"/>
    </location>
</feature>
<feature type="region of interest" description="Disordered" evidence="3">
    <location>
        <begin position="273"/>
        <end position="299"/>
    </location>
</feature>
<feature type="region of interest" description="Disordered" evidence="3">
    <location>
        <begin position="350"/>
        <end position="413"/>
    </location>
</feature>
<feature type="region of interest" description="Disordered" evidence="3">
    <location>
        <begin position="531"/>
        <end position="567"/>
    </location>
</feature>
<feature type="compositionally biased region" description="Acidic residues" evidence="3">
    <location>
        <begin position="1"/>
        <end position="12"/>
    </location>
</feature>
<feature type="compositionally biased region" description="Basic and acidic residues" evidence="3">
    <location>
        <begin position="21"/>
        <end position="49"/>
    </location>
</feature>
<feature type="compositionally biased region" description="Polar residues" evidence="3">
    <location>
        <begin position="52"/>
        <end position="62"/>
    </location>
</feature>
<feature type="compositionally biased region" description="Basic and acidic residues" evidence="3">
    <location>
        <begin position="65"/>
        <end position="74"/>
    </location>
</feature>
<feature type="compositionally biased region" description="Polar residues" evidence="3">
    <location>
        <begin position="144"/>
        <end position="155"/>
    </location>
</feature>
<feature type="compositionally biased region" description="Polar residues" evidence="3">
    <location>
        <begin position="275"/>
        <end position="287"/>
    </location>
</feature>
<feature type="compositionally biased region" description="Low complexity" evidence="3">
    <location>
        <begin position="356"/>
        <end position="367"/>
    </location>
</feature>
<feature type="compositionally biased region" description="Polar residues" evidence="3">
    <location>
        <begin position="369"/>
        <end position="379"/>
    </location>
</feature>
<feature type="compositionally biased region" description="Low complexity" evidence="3">
    <location>
        <begin position="394"/>
        <end position="408"/>
    </location>
</feature>
<name>ACUK_BOTFB</name>
<organism>
    <name type="scientific">Botryotinia fuckeliana (strain B05.10)</name>
    <name type="common">Noble rot fungus</name>
    <name type="synonym">Botrytis cinerea</name>
    <dbReference type="NCBI Taxonomy" id="332648"/>
    <lineage>
        <taxon>Eukaryota</taxon>
        <taxon>Fungi</taxon>
        <taxon>Dikarya</taxon>
        <taxon>Ascomycota</taxon>
        <taxon>Pezizomycotina</taxon>
        <taxon>Leotiomycetes</taxon>
        <taxon>Helotiales</taxon>
        <taxon>Sclerotiniaceae</taxon>
        <taxon>Botrytis</taxon>
    </lineage>
</organism>
<reference key="1">
    <citation type="journal article" date="2011" name="PLoS Genet.">
        <title>Genomic analysis of the necrotrophic fungal pathogens Sclerotinia sclerotiorum and Botrytis cinerea.</title>
        <authorList>
            <person name="Amselem J."/>
            <person name="Cuomo C.A."/>
            <person name="van Kan J.A.L."/>
            <person name="Viaud M."/>
            <person name="Benito E.P."/>
            <person name="Couloux A."/>
            <person name="Coutinho P.M."/>
            <person name="de Vries R.P."/>
            <person name="Dyer P.S."/>
            <person name="Fillinger S."/>
            <person name="Fournier E."/>
            <person name="Gout L."/>
            <person name="Hahn M."/>
            <person name="Kohn L."/>
            <person name="Lapalu N."/>
            <person name="Plummer K.M."/>
            <person name="Pradier J.-M."/>
            <person name="Quevillon E."/>
            <person name="Sharon A."/>
            <person name="Simon A."/>
            <person name="ten Have A."/>
            <person name="Tudzynski B."/>
            <person name="Tudzynski P."/>
            <person name="Wincker P."/>
            <person name="Andrew M."/>
            <person name="Anthouard V."/>
            <person name="Beever R.E."/>
            <person name="Beffa R."/>
            <person name="Benoit I."/>
            <person name="Bouzid O."/>
            <person name="Brault B."/>
            <person name="Chen Z."/>
            <person name="Choquer M."/>
            <person name="Collemare J."/>
            <person name="Cotton P."/>
            <person name="Danchin E.G."/>
            <person name="Da Silva C."/>
            <person name="Gautier A."/>
            <person name="Giraud C."/>
            <person name="Giraud T."/>
            <person name="Gonzalez C."/>
            <person name="Grossetete S."/>
            <person name="Gueldener U."/>
            <person name="Henrissat B."/>
            <person name="Howlett B.J."/>
            <person name="Kodira C."/>
            <person name="Kretschmer M."/>
            <person name="Lappartient A."/>
            <person name="Leroch M."/>
            <person name="Levis C."/>
            <person name="Mauceli E."/>
            <person name="Neuveglise C."/>
            <person name="Oeser B."/>
            <person name="Pearson M."/>
            <person name="Poulain J."/>
            <person name="Poussereau N."/>
            <person name="Quesneville H."/>
            <person name="Rascle C."/>
            <person name="Schumacher J."/>
            <person name="Segurens B."/>
            <person name="Sexton A."/>
            <person name="Silva E."/>
            <person name="Sirven C."/>
            <person name="Soanes D.M."/>
            <person name="Talbot N.J."/>
            <person name="Templeton M."/>
            <person name="Yandava C."/>
            <person name="Yarden O."/>
            <person name="Zeng Q."/>
            <person name="Rollins J.A."/>
            <person name="Lebrun M.-H."/>
            <person name="Dickman M."/>
        </authorList>
    </citation>
    <scope>NUCLEOTIDE SEQUENCE [LARGE SCALE GENOMIC DNA]</scope>
    <source>
        <strain>B05.10</strain>
    </source>
</reference>
<reference key="2">
    <citation type="journal article" date="2012" name="Eukaryot. Cell">
        <title>Genome update of Botrytis cinerea strains B05.10 and T4.</title>
        <authorList>
            <person name="Staats M."/>
            <person name="van Kan J.A.L."/>
        </authorList>
    </citation>
    <scope>NUCLEOTIDE SEQUENCE [LARGE SCALE GENOMIC DNA]</scope>
    <scope>GENOME REANNOTATION</scope>
    <source>
        <strain>B05.10</strain>
    </source>
</reference>
<reference key="3">
    <citation type="journal article" date="2017" name="Mol. Plant Pathol.">
        <title>A gapless genome sequence of the fungus Botrytis cinerea.</title>
        <authorList>
            <person name="van Kan J.A.L."/>
            <person name="Stassen J.H.M."/>
            <person name="Mosbach A."/>
            <person name="van der Lee T.A.J."/>
            <person name="Faino L."/>
            <person name="Farmer A.D."/>
            <person name="Papasotiriou D.G."/>
            <person name="Zhou S."/>
            <person name="Seidl M.F."/>
            <person name="Cottam E."/>
            <person name="Edel D."/>
            <person name="Hahn M."/>
            <person name="Schwartz D.C."/>
            <person name="Dietrich R.A."/>
            <person name="Widdison S."/>
            <person name="Scalliet G."/>
        </authorList>
    </citation>
    <scope>NUCLEOTIDE SEQUENCE [LARGE SCALE GENOMIC DNA]</scope>
    <scope>GENOME REANNOTATION</scope>
    <source>
        <strain>B05.10</strain>
    </source>
</reference>
<sequence length="693" mass="74939">MSGETEIDDPEVSDGASENDYSDHEQELDVIGKEGDNQEMAEQKVRPDGEENGNTVGATATVTKPKFDPKDPLRPRRKKARRACFACQRAHLTCGDERPCQRCIKRGLADACQDGVRKKAKYLHDAPPEALRPVLGPTYNQQVSSNRATAASTPTEPSPGMGNFFSQPDTSPSYPLFGANQQGQMPPPLQNRLSFGSNQPSPISPTFHTAGNRPAGMQGISLPQVSNDSHSAFGGGAFFDPSNPALFNFDLEGLNFGNHYGALEFGMLGHMASGSAETPPQDSSAGMPQNVGDLGFSNNSAFTNNPPFNQIYSHDSLPDFAVGLDRPNGGNVFGNNNPHHGLPHAYAIATSGSQHSPSTDASPAASTMGFESSPTTTNYPAPASHRPAKRQDTKSGPSGKLGPSGILGKRNRDPSSIYDTVHEPYSYTTGFHSLTAFIQKRFSPNKTLRIAKSLASIRPSFISCTKTLNRQDLIFMEKCFQRTLFEYEDFMLNCCTPTVVCRRTGEIAAANKEFTLLTGWRKEVLLGNEANLNTNTGSGGPPSSGSSGRGSFTTPRMRPVNLADSNPNGKTQPIFLAELLDDDSVIEFYEDFARLAFGDSRGSVTTRYKLLRYQTAKDTSQSPEGDKGKRKDIVGFNGAGIGGMGNRIKEIDANNGIESLQQDGKVDCSSCWTIKRDVFDIPMLIVMNFLPCI</sequence>
<evidence type="ECO:0000250" key="1"/>
<evidence type="ECO:0000255" key="2">
    <source>
        <dbReference type="PROSITE-ProRule" id="PRU00227"/>
    </source>
</evidence>
<evidence type="ECO:0000256" key="3">
    <source>
        <dbReference type="SAM" id="MobiDB-lite"/>
    </source>
</evidence>
<evidence type="ECO:0000305" key="4"/>
<proteinExistence type="inferred from homology"/>
<protein>
    <recommendedName>
        <fullName>Transcription activator of gluconeogenesis BC1G_14637</fullName>
    </recommendedName>
</protein>
<keyword id="KW-0010">Activator</keyword>
<keyword id="KW-0238">DNA-binding</keyword>
<keyword id="KW-0312">Gluconeogenesis</keyword>
<keyword id="KW-0479">Metal-binding</keyword>
<keyword id="KW-0539">Nucleus</keyword>
<keyword id="KW-1185">Reference proteome</keyword>
<keyword id="KW-0804">Transcription</keyword>
<keyword id="KW-0805">Transcription regulation</keyword>
<keyword id="KW-0862">Zinc</keyword>
<gene>
    <name type="ORF">BC1G_14637</name>
    <name type="ORF">BCIN_16g00520</name>
</gene>